<organism>
    <name type="scientific">Paramagnetospirillum magneticum (strain ATCC 700264 / AMB-1)</name>
    <name type="common">Magnetospirillum magneticum</name>
    <dbReference type="NCBI Taxonomy" id="342108"/>
    <lineage>
        <taxon>Bacteria</taxon>
        <taxon>Pseudomonadati</taxon>
        <taxon>Pseudomonadota</taxon>
        <taxon>Alphaproteobacteria</taxon>
        <taxon>Rhodospirillales</taxon>
        <taxon>Magnetospirillaceae</taxon>
        <taxon>Paramagnetospirillum</taxon>
    </lineage>
</organism>
<gene>
    <name evidence="1" type="primary">recA</name>
    <name type="ordered locus">amb0622</name>
</gene>
<keyword id="KW-0067">ATP-binding</keyword>
<keyword id="KW-0963">Cytoplasm</keyword>
<keyword id="KW-0227">DNA damage</keyword>
<keyword id="KW-0233">DNA recombination</keyword>
<keyword id="KW-0234">DNA repair</keyword>
<keyword id="KW-0238">DNA-binding</keyword>
<keyword id="KW-0547">Nucleotide-binding</keyword>
<keyword id="KW-0742">SOS response</keyword>
<reference key="1">
    <citation type="journal article" date="2005" name="DNA Res.">
        <title>Complete genome sequence of the facultative anaerobic magnetotactic bacterium Magnetospirillum sp. strain AMB-1.</title>
        <authorList>
            <person name="Matsunaga T."/>
            <person name="Okamura Y."/>
            <person name="Fukuda Y."/>
            <person name="Wahyudi A.T."/>
            <person name="Murase Y."/>
            <person name="Takeyama H."/>
        </authorList>
    </citation>
    <scope>NUCLEOTIDE SEQUENCE [LARGE SCALE GENOMIC DNA]</scope>
    <source>
        <strain>ATCC 700264 / AMB-1</strain>
    </source>
</reference>
<dbReference type="EMBL" id="AP007255">
    <property type="protein sequence ID" value="BAE49426.1"/>
    <property type="molecule type" value="Genomic_DNA"/>
</dbReference>
<dbReference type="RefSeq" id="WP_011383065.1">
    <property type="nucleotide sequence ID" value="NC_007626.1"/>
</dbReference>
<dbReference type="SMR" id="Q2W9P9"/>
<dbReference type="STRING" id="342108.amb0622"/>
<dbReference type="KEGG" id="mag:amb0622"/>
<dbReference type="HOGENOM" id="CLU_040469_1_2_5"/>
<dbReference type="OrthoDB" id="9776733at2"/>
<dbReference type="Proteomes" id="UP000007058">
    <property type="component" value="Chromosome"/>
</dbReference>
<dbReference type="GO" id="GO:0005829">
    <property type="term" value="C:cytosol"/>
    <property type="evidence" value="ECO:0007669"/>
    <property type="project" value="TreeGrafter"/>
</dbReference>
<dbReference type="GO" id="GO:0005524">
    <property type="term" value="F:ATP binding"/>
    <property type="evidence" value="ECO:0007669"/>
    <property type="project" value="UniProtKB-UniRule"/>
</dbReference>
<dbReference type="GO" id="GO:0016887">
    <property type="term" value="F:ATP hydrolysis activity"/>
    <property type="evidence" value="ECO:0007669"/>
    <property type="project" value="InterPro"/>
</dbReference>
<dbReference type="GO" id="GO:0140664">
    <property type="term" value="F:ATP-dependent DNA damage sensor activity"/>
    <property type="evidence" value="ECO:0007669"/>
    <property type="project" value="InterPro"/>
</dbReference>
<dbReference type="GO" id="GO:0003684">
    <property type="term" value="F:damaged DNA binding"/>
    <property type="evidence" value="ECO:0007669"/>
    <property type="project" value="UniProtKB-UniRule"/>
</dbReference>
<dbReference type="GO" id="GO:0003697">
    <property type="term" value="F:single-stranded DNA binding"/>
    <property type="evidence" value="ECO:0007669"/>
    <property type="project" value="UniProtKB-UniRule"/>
</dbReference>
<dbReference type="GO" id="GO:0006310">
    <property type="term" value="P:DNA recombination"/>
    <property type="evidence" value="ECO:0007669"/>
    <property type="project" value="UniProtKB-UniRule"/>
</dbReference>
<dbReference type="GO" id="GO:0006281">
    <property type="term" value="P:DNA repair"/>
    <property type="evidence" value="ECO:0007669"/>
    <property type="project" value="UniProtKB-UniRule"/>
</dbReference>
<dbReference type="GO" id="GO:0009432">
    <property type="term" value="P:SOS response"/>
    <property type="evidence" value="ECO:0007669"/>
    <property type="project" value="UniProtKB-UniRule"/>
</dbReference>
<dbReference type="CDD" id="cd00983">
    <property type="entry name" value="RecA"/>
    <property type="match status" value="1"/>
</dbReference>
<dbReference type="FunFam" id="3.40.50.300:FF:000087">
    <property type="entry name" value="Recombinase RecA"/>
    <property type="match status" value="1"/>
</dbReference>
<dbReference type="Gene3D" id="3.40.50.300">
    <property type="entry name" value="P-loop containing nucleotide triphosphate hydrolases"/>
    <property type="match status" value="1"/>
</dbReference>
<dbReference type="HAMAP" id="MF_00268">
    <property type="entry name" value="RecA"/>
    <property type="match status" value="1"/>
</dbReference>
<dbReference type="InterPro" id="IPR003593">
    <property type="entry name" value="AAA+_ATPase"/>
</dbReference>
<dbReference type="InterPro" id="IPR013765">
    <property type="entry name" value="DNA_recomb/repair_RecA"/>
</dbReference>
<dbReference type="InterPro" id="IPR020584">
    <property type="entry name" value="DNA_recomb/repair_RecA_CS"/>
</dbReference>
<dbReference type="InterPro" id="IPR027417">
    <property type="entry name" value="P-loop_NTPase"/>
</dbReference>
<dbReference type="InterPro" id="IPR049261">
    <property type="entry name" value="RecA-like_C"/>
</dbReference>
<dbReference type="InterPro" id="IPR049428">
    <property type="entry name" value="RecA-like_N"/>
</dbReference>
<dbReference type="InterPro" id="IPR020588">
    <property type="entry name" value="RecA_ATP-bd"/>
</dbReference>
<dbReference type="InterPro" id="IPR023400">
    <property type="entry name" value="RecA_C_sf"/>
</dbReference>
<dbReference type="InterPro" id="IPR020587">
    <property type="entry name" value="RecA_monomer-monomer_interface"/>
</dbReference>
<dbReference type="NCBIfam" id="TIGR02012">
    <property type="entry name" value="tigrfam_recA"/>
    <property type="match status" value="1"/>
</dbReference>
<dbReference type="PANTHER" id="PTHR45900:SF1">
    <property type="entry name" value="MITOCHONDRIAL DNA REPAIR PROTEIN RECA HOMOLOG-RELATED"/>
    <property type="match status" value="1"/>
</dbReference>
<dbReference type="PANTHER" id="PTHR45900">
    <property type="entry name" value="RECA"/>
    <property type="match status" value="1"/>
</dbReference>
<dbReference type="Pfam" id="PF00154">
    <property type="entry name" value="RecA"/>
    <property type="match status" value="1"/>
</dbReference>
<dbReference type="Pfam" id="PF21096">
    <property type="entry name" value="RecA_C"/>
    <property type="match status" value="1"/>
</dbReference>
<dbReference type="PRINTS" id="PR00142">
    <property type="entry name" value="RECA"/>
</dbReference>
<dbReference type="SMART" id="SM00382">
    <property type="entry name" value="AAA"/>
    <property type="match status" value="1"/>
</dbReference>
<dbReference type="SUPFAM" id="SSF52540">
    <property type="entry name" value="P-loop containing nucleoside triphosphate hydrolases"/>
    <property type="match status" value="1"/>
</dbReference>
<dbReference type="SUPFAM" id="SSF54752">
    <property type="entry name" value="RecA protein, C-terminal domain"/>
    <property type="match status" value="1"/>
</dbReference>
<dbReference type="PROSITE" id="PS00321">
    <property type="entry name" value="RECA_1"/>
    <property type="match status" value="1"/>
</dbReference>
<dbReference type="PROSITE" id="PS50162">
    <property type="entry name" value="RECA_2"/>
    <property type="match status" value="1"/>
</dbReference>
<dbReference type="PROSITE" id="PS50163">
    <property type="entry name" value="RECA_3"/>
    <property type="match status" value="1"/>
</dbReference>
<accession>Q2W9P9</accession>
<evidence type="ECO:0000255" key="1">
    <source>
        <dbReference type="HAMAP-Rule" id="MF_00268"/>
    </source>
</evidence>
<protein>
    <recommendedName>
        <fullName evidence="1">Protein RecA</fullName>
    </recommendedName>
    <alternativeName>
        <fullName evidence="1">Recombinase A</fullName>
    </alternativeName>
</protein>
<name>RECA_PARM1</name>
<comment type="function">
    <text evidence="1">Can catalyze the hydrolysis of ATP in the presence of single-stranded DNA, the ATP-dependent uptake of single-stranded DNA by duplex DNA, and the ATP-dependent hybridization of homologous single-stranded DNAs. It interacts with LexA causing its activation and leading to its autocatalytic cleavage.</text>
</comment>
<comment type="subcellular location">
    <subcellularLocation>
        <location evidence="1">Cytoplasm</location>
    </subcellularLocation>
</comment>
<comment type="similarity">
    <text evidence="1">Belongs to the RecA family.</text>
</comment>
<feature type="chain" id="PRO_1000059129" description="Protein RecA">
    <location>
        <begin position="1"/>
        <end position="359"/>
    </location>
</feature>
<feature type="binding site" evidence="1">
    <location>
        <begin position="77"/>
        <end position="84"/>
    </location>
    <ligand>
        <name>ATP</name>
        <dbReference type="ChEBI" id="CHEBI:30616"/>
    </ligand>
</feature>
<proteinExistence type="inferred from homology"/>
<sequence length="359" mass="38245">MSQAALRLVDKDTMDRQKALEAAVSQIERAFGKGSIMKLGGKDQVVETEVVSTGSLGLDVALGIGGVPRGRIIEVYGPESSGKTTLALHIIAEAQKKGGTCAFVDAEHALDPSYARKLGVNLDELLISQPDAGEQALEIADTLVRSGAVDVLVVDSVAALVPRAELEGEMGDNHMGLHARLMSQALRKLTGSVSKSKTIVIFINQIRMKIGVMFGNPETTTGGNALKFYASVRMEIRRVGAIKDRDEVVGNQTRVKVVKNKLAPPFKVVDFDIMYGEGISKMGELIDLGVKANVVEKSGAWFSYNSTRIGQGRENAKTFLRENPAMAAEIEGAIRQNAGLISEALAGGPGDLDGTPVEE</sequence>